<feature type="chain" id="PRO_1000116094" description="Ferrochelatase">
    <location>
        <begin position="1"/>
        <end position="320"/>
    </location>
</feature>
<feature type="binding site" evidence="1">
    <location>
        <position position="194"/>
    </location>
    <ligand>
        <name>Fe cation</name>
        <dbReference type="ChEBI" id="CHEBI:24875"/>
    </ligand>
</feature>
<feature type="binding site" evidence="1">
    <location>
        <position position="275"/>
    </location>
    <ligand>
        <name>Fe cation</name>
        <dbReference type="ChEBI" id="CHEBI:24875"/>
    </ligand>
</feature>
<accession>B1JHN0</accession>
<sequence length="320" mass="36185">MMQSKPGVLMVNLGTPDAPTSKAIKRYLAEFLSDRRVVDTSPLLWWPLLHGVILPLRSPRVAKLYQSVWMEEGSPLLVYSRRQQKALAARMPDIPVELGMSYGSPNLPEAIEKLLAQGVTNLVILPLYPQYSCSTSAAVWDAVARVLKGYRRLPSISFIRDYAEHPAYISALKQSVERSFAEHGQPDRLVMSFHGIPKRYAQLGDDYPIRCEDTSRALRAALPLPAEKIIMTYQSRFGREPWLTPYTDETLKSLPSQGVKHIQLICPGFSADCLETLEEIKEQNREFFLHAGGEKFEYIPALNDDEGHIALLEQLIRHNI</sequence>
<keyword id="KW-0963">Cytoplasm</keyword>
<keyword id="KW-0350">Heme biosynthesis</keyword>
<keyword id="KW-0408">Iron</keyword>
<keyword id="KW-0456">Lyase</keyword>
<keyword id="KW-0479">Metal-binding</keyword>
<keyword id="KW-0627">Porphyrin biosynthesis</keyword>
<gene>
    <name evidence="1" type="primary">hemH</name>
    <name type="ordered locus">YPK_3193</name>
</gene>
<dbReference type="EC" id="4.98.1.1" evidence="1"/>
<dbReference type="EMBL" id="CP000950">
    <property type="protein sequence ID" value="ACA69462.1"/>
    <property type="molecule type" value="Genomic_DNA"/>
</dbReference>
<dbReference type="RefSeq" id="WP_002208599.1">
    <property type="nucleotide sequence ID" value="NZ_CP009792.1"/>
</dbReference>
<dbReference type="SMR" id="B1JHN0"/>
<dbReference type="GeneID" id="57975594"/>
<dbReference type="KEGG" id="ypy:YPK_3193"/>
<dbReference type="UniPathway" id="UPA00252">
    <property type="reaction ID" value="UER00325"/>
</dbReference>
<dbReference type="GO" id="GO:0005737">
    <property type="term" value="C:cytoplasm"/>
    <property type="evidence" value="ECO:0007669"/>
    <property type="project" value="UniProtKB-SubCell"/>
</dbReference>
<dbReference type="GO" id="GO:0004325">
    <property type="term" value="F:ferrochelatase activity"/>
    <property type="evidence" value="ECO:0007669"/>
    <property type="project" value="UniProtKB-UniRule"/>
</dbReference>
<dbReference type="GO" id="GO:0046872">
    <property type="term" value="F:metal ion binding"/>
    <property type="evidence" value="ECO:0007669"/>
    <property type="project" value="UniProtKB-KW"/>
</dbReference>
<dbReference type="GO" id="GO:0006783">
    <property type="term" value="P:heme biosynthetic process"/>
    <property type="evidence" value="ECO:0007669"/>
    <property type="project" value="UniProtKB-UniRule"/>
</dbReference>
<dbReference type="CDD" id="cd00419">
    <property type="entry name" value="Ferrochelatase_C"/>
    <property type="match status" value="1"/>
</dbReference>
<dbReference type="CDD" id="cd03411">
    <property type="entry name" value="Ferrochelatase_N"/>
    <property type="match status" value="1"/>
</dbReference>
<dbReference type="FunFam" id="3.40.50.1400:FF:000004">
    <property type="entry name" value="Ferrochelatase"/>
    <property type="match status" value="1"/>
</dbReference>
<dbReference type="Gene3D" id="3.40.50.1400">
    <property type="match status" value="2"/>
</dbReference>
<dbReference type="HAMAP" id="MF_00323">
    <property type="entry name" value="Ferrochelatase"/>
    <property type="match status" value="1"/>
</dbReference>
<dbReference type="InterPro" id="IPR001015">
    <property type="entry name" value="Ferrochelatase"/>
</dbReference>
<dbReference type="InterPro" id="IPR019772">
    <property type="entry name" value="Ferrochelatase_AS"/>
</dbReference>
<dbReference type="InterPro" id="IPR033644">
    <property type="entry name" value="Ferrochelatase_C"/>
</dbReference>
<dbReference type="InterPro" id="IPR033659">
    <property type="entry name" value="Ferrochelatase_N"/>
</dbReference>
<dbReference type="NCBIfam" id="TIGR00109">
    <property type="entry name" value="hemH"/>
    <property type="match status" value="1"/>
</dbReference>
<dbReference type="PANTHER" id="PTHR11108">
    <property type="entry name" value="FERROCHELATASE"/>
    <property type="match status" value="1"/>
</dbReference>
<dbReference type="PANTHER" id="PTHR11108:SF1">
    <property type="entry name" value="FERROCHELATASE, MITOCHONDRIAL"/>
    <property type="match status" value="1"/>
</dbReference>
<dbReference type="Pfam" id="PF00762">
    <property type="entry name" value="Ferrochelatase"/>
    <property type="match status" value="1"/>
</dbReference>
<dbReference type="SUPFAM" id="SSF53800">
    <property type="entry name" value="Chelatase"/>
    <property type="match status" value="1"/>
</dbReference>
<dbReference type="PROSITE" id="PS00534">
    <property type="entry name" value="FERROCHELATASE"/>
    <property type="match status" value="1"/>
</dbReference>
<organism>
    <name type="scientific">Yersinia pseudotuberculosis serotype O:3 (strain YPIII)</name>
    <dbReference type="NCBI Taxonomy" id="502800"/>
    <lineage>
        <taxon>Bacteria</taxon>
        <taxon>Pseudomonadati</taxon>
        <taxon>Pseudomonadota</taxon>
        <taxon>Gammaproteobacteria</taxon>
        <taxon>Enterobacterales</taxon>
        <taxon>Yersiniaceae</taxon>
        <taxon>Yersinia</taxon>
    </lineage>
</organism>
<protein>
    <recommendedName>
        <fullName evidence="1">Ferrochelatase</fullName>
        <ecNumber evidence="1">4.98.1.1</ecNumber>
    </recommendedName>
    <alternativeName>
        <fullName evidence="1">Heme synthase</fullName>
    </alternativeName>
    <alternativeName>
        <fullName evidence="1">Protoheme ferro-lyase</fullName>
    </alternativeName>
</protein>
<reference key="1">
    <citation type="submission" date="2008-02" db="EMBL/GenBank/DDBJ databases">
        <title>Complete sequence of Yersinia pseudotuberculosis YPIII.</title>
        <authorList>
            <consortium name="US DOE Joint Genome Institute"/>
            <person name="Copeland A."/>
            <person name="Lucas S."/>
            <person name="Lapidus A."/>
            <person name="Glavina del Rio T."/>
            <person name="Dalin E."/>
            <person name="Tice H."/>
            <person name="Bruce D."/>
            <person name="Goodwin L."/>
            <person name="Pitluck S."/>
            <person name="Munk A.C."/>
            <person name="Brettin T."/>
            <person name="Detter J.C."/>
            <person name="Han C."/>
            <person name="Tapia R."/>
            <person name="Schmutz J."/>
            <person name="Larimer F."/>
            <person name="Land M."/>
            <person name="Hauser L."/>
            <person name="Challacombe J.F."/>
            <person name="Green L."/>
            <person name="Lindler L.E."/>
            <person name="Nikolich M.P."/>
            <person name="Richardson P."/>
        </authorList>
    </citation>
    <scope>NUCLEOTIDE SEQUENCE [LARGE SCALE GENOMIC DNA]</scope>
    <source>
        <strain>YPIII</strain>
    </source>
</reference>
<evidence type="ECO:0000255" key="1">
    <source>
        <dbReference type="HAMAP-Rule" id="MF_00323"/>
    </source>
</evidence>
<proteinExistence type="inferred from homology"/>
<name>HEMH_YERPY</name>
<comment type="function">
    <text evidence="1">Catalyzes the ferrous insertion into protoporphyrin IX.</text>
</comment>
<comment type="catalytic activity">
    <reaction evidence="1">
        <text>heme b + 2 H(+) = protoporphyrin IX + Fe(2+)</text>
        <dbReference type="Rhea" id="RHEA:22584"/>
        <dbReference type="ChEBI" id="CHEBI:15378"/>
        <dbReference type="ChEBI" id="CHEBI:29033"/>
        <dbReference type="ChEBI" id="CHEBI:57306"/>
        <dbReference type="ChEBI" id="CHEBI:60344"/>
        <dbReference type="EC" id="4.98.1.1"/>
    </reaction>
</comment>
<comment type="pathway">
    <text evidence="1">Porphyrin-containing compound metabolism; protoheme biosynthesis; protoheme from protoporphyrin-IX: step 1/1.</text>
</comment>
<comment type="subcellular location">
    <subcellularLocation>
        <location evidence="1">Cytoplasm</location>
    </subcellularLocation>
</comment>
<comment type="similarity">
    <text evidence="1">Belongs to the ferrochelatase family.</text>
</comment>